<comment type="catalytic activity">
    <reaction evidence="1">
        <text>tRNA(Leu) + L-leucine + ATP = L-leucyl-tRNA(Leu) + AMP + diphosphate</text>
        <dbReference type="Rhea" id="RHEA:11688"/>
        <dbReference type="Rhea" id="RHEA-COMP:9613"/>
        <dbReference type="Rhea" id="RHEA-COMP:9622"/>
        <dbReference type="ChEBI" id="CHEBI:30616"/>
        <dbReference type="ChEBI" id="CHEBI:33019"/>
        <dbReference type="ChEBI" id="CHEBI:57427"/>
        <dbReference type="ChEBI" id="CHEBI:78442"/>
        <dbReference type="ChEBI" id="CHEBI:78494"/>
        <dbReference type="ChEBI" id="CHEBI:456215"/>
        <dbReference type="EC" id="6.1.1.4"/>
    </reaction>
</comment>
<comment type="subcellular location">
    <subcellularLocation>
        <location evidence="1">Cytoplasm</location>
    </subcellularLocation>
</comment>
<comment type="similarity">
    <text evidence="1">Belongs to the class-I aminoacyl-tRNA synthetase family.</text>
</comment>
<sequence>MQEQYRPEEIESKVQLHWDEKRTFEVTEDESKEKYYCLSMLPYPSGRLHMGHVRNYTIGDVIARYQRMLGKNVLQPIGWDAFGLPAEGAAVKNNTAPAPWTYDNIAYMKNQLKMLGFGYDWSRELATCTPEYYRWEQKFFTELYKKGLVYKKTSAVNWCPNDQTVLANEQVIDGCCWRCDTKVERKEIPQWFIKITAYADELLNDLDKLDHWPDTVKTMQRNWIGRSEGVEITFNVNDYDNTLTVYTTRPDTFMGCTYLAVAAGHPLAQKAAENNPELAAFIDECRNTKVAEAEMATMEKKGVDTGFKAVHPLTGEEIPVWAANFVLMEYGTGAVMAVPGHDQRDYEFASKYGLNIKPVILAADGSEPDLSQQALTEKGVLFNSGEFNGLDHEAAFNAIADKLTAMGVGERKVNYRLRDWGVSRQRYWGAPIPMVTLEDGTVMPTPDDQLPVILPEDVVMDGITSPIKADPEWAKTTVNGMPALRETDTFDTFMESSWYYARYTCPQYKEGMLDSEAANYWLPVDIYIGGIEHAIMHLLYFRFFHKLMRDAGMVNSDEPAKQLLCQGMVLADAFYYVGENGERNWVSPVDAIVERDEKGRIVKAKDAAGHELVYTGMSKMSKSKNNGIDPQVMVERYGADTVRLFMMFASPADMTLEWQESGVEGANRFLKRVWKLVYEHTAKGDVAALNVDALTENQKALRRDVHKTIAKVTDDIGRRQTFNTAIAAIMELMNKLAKAPTDGEQDRALMQEALLAVVRMLNPFTPHICFTLWQELKGEGDIDNAPWPVADEKAMVEDSTLVVVQVNGKVRAKITVPVDATEEQVRERAGQEHLVAKYLDGVTVRKVIYVPGKLLNLVVG</sequence>
<proteinExistence type="inferred from homology"/>
<name>SYL_ECOBW</name>
<gene>
    <name evidence="1" type="primary">leuS</name>
    <name type="ordered locus">BWG_0513</name>
</gene>
<feature type="chain" id="PRO_1000202218" description="Leucine--tRNA ligase">
    <location>
        <begin position="1"/>
        <end position="860"/>
    </location>
</feature>
<feature type="short sequence motif" description="'HIGH' region">
    <location>
        <begin position="42"/>
        <end position="52"/>
    </location>
</feature>
<feature type="short sequence motif" description="'KMSKS' region">
    <location>
        <begin position="619"/>
        <end position="623"/>
    </location>
</feature>
<feature type="binding site" evidence="1">
    <location>
        <position position="622"/>
    </location>
    <ligand>
        <name>ATP</name>
        <dbReference type="ChEBI" id="CHEBI:30616"/>
    </ligand>
</feature>
<dbReference type="EC" id="6.1.1.4" evidence="1"/>
<dbReference type="EMBL" id="CP001396">
    <property type="protein sequence ID" value="ACR63641.1"/>
    <property type="molecule type" value="Genomic_DNA"/>
</dbReference>
<dbReference type="RefSeq" id="WP_001340834.1">
    <property type="nucleotide sequence ID" value="NC_012759.1"/>
</dbReference>
<dbReference type="SMR" id="C4ZWC9"/>
<dbReference type="KEGG" id="ebw:BWG_0513"/>
<dbReference type="HOGENOM" id="CLU_004427_0_0_6"/>
<dbReference type="GO" id="GO:0005829">
    <property type="term" value="C:cytosol"/>
    <property type="evidence" value="ECO:0007669"/>
    <property type="project" value="TreeGrafter"/>
</dbReference>
<dbReference type="GO" id="GO:0002161">
    <property type="term" value="F:aminoacyl-tRNA deacylase activity"/>
    <property type="evidence" value="ECO:0007669"/>
    <property type="project" value="InterPro"/>
</dbReference>
<dbReference type="GO" id="GO:0005524">
    <property type="term" value="F:ATP binding"/>
    <property type="evidence" value="ECO:0007669"/>
    <property type="project" value="UniProtKB-UniRule"/>
</dbReference>
<dbReference type="GO" id="GO:0004823">
    <property type="term" value="F:leucine-tRNA ligase activity"/>
    <property type="evidence" value="ECO:0007669"/>
    <property type="project" value="UniProtKB-UniRule"/>
</dbReference>
<dbReference type="GO" id="GO:0006429">
    <property type="term" value="P:leucyl-tRNA aminoacylation"/>
    <property type="evidence" value="ECO:0007669"/>
    <property type="project" value="UniProtKB-UniRule"/>
</dbReference>
<dbReference type="CDD" id="cd07958">
    <property type="entry name" value="Anticodon_Ia_Leu_BEm"/>
    <property type="match status" value="1"/>
</dbReference>
<dbReference type="CDD" id="cd00812">
    <property type="entry name" value="LeuRS_core"/>
    <property type="match status" value="1"/>
</dbReference>
<dbReference type="FunFam" id="1.10.730.10:FF:000002">
    <property type="entry name" value="Leucine--tRNA ligase"/>
    <property type="match status" value="2"/>
</dbReference>
<dbReference type="FunFam" id="2.20.28.290:FF:000001">
    <property type="entry name" value="Leucine--tRNA ligase"/>
    <property type="match status" value="1"/>
</dbReference>
<dbReference type="FunFam" id="3.10.20.590:FF:000001">
    <property type="entry name" value="Leucine--tRNA ligase"/>
    <property type="match status" value="1"/>
</dbReference>
<dbReference type="FunFam" id="3.40.50.620:FF:000003">
    <property type="entry name" value="Leucine--tRNA ligase"/>
    <property type="match status" value="1"/>
</dbReference>
<dbReference type="FunFam" id="3.40.50.620:FF:000124">
    <property type="entry name" value="Leucine--tRNA ligase"/>
    <property type="match status" value="1"/>
</dbReference>
<dbReference type="FunFam" id="3.90.740.10:FF:000012">
    <property type="entry name" value="Leucine--tRNA ligase"/>
    <property type="match status" value="1"/>
</dbReference>
<dbReference type="Gene3D" id="2.20.28.290">
    <property type="match status" value="1"/>
</dbReference>
<dbReference type="Gene3D" id="3.10.20.590">
    <property type="match status" value="1"/>
</dbReference>
<dbReference type="Gene3D" id="3.40.50.620">
    <property type="entry name" value="HUPs"/>
    <property type="match status" value="2"/>
</dbReference>
<dbReference type="Gene3D" id="1.10.730.10">
    <property type="entry name" value="Isoleucyl-tRNA Synthetase, Domain 1"/>
    <property type="match status" value="2"/>
</dbReference>
<dbReference type="HAMAP" id="MF_00049_B">
    <property type="entry name" value="Leu_tRNA_synth_B"/>
    <property type="match status" value="1"/>
</dbReference>
<dbReference type="InterPro" id="IPR001412">
    <property type="entry name" value="aa-tRNA-synth_I_CS"/>
</dbReference>
<dbReference type="InterPro" id="IPR002300">
    <property type="entry name" value="aa-tRNA-synth_Ia"/>
</dbReference>
<dbReference type="InterPro" id="IPR002302">
    <property type="entry name" value="Leu-tRNA-ligase"/>
</dbReference>
<dbReference type="InterPro" id="IPR025709">
    <property type="entry name" value="Leu_tRNA-synth_edit"/>
</dbReference>
<dbReference type="InterPro" id="IPR013155">
    <property type="entry name" value="M/V/L/I-tRNA-synth_anticd-bd"/>
</dbReference>
<dbReference type="InterPro" id="IPR015413">
    <property type="entry name" value="Methionyl/Leucyl_tRNA_Synth"/>
</dbReference>
<dbReference type="InterPro" id="IPR014729">
    <property type="entry name" value="Rossmann-like_a/b/a_fold"/>
</dbReference>
<dbReference type="InterPro" id="IPR009080">
    <property type="entry name" value="tRNAsynth_Ia_anticodon-bd"/>
</dbReference>
<dbReference type="InterPro" id="IPR009008">
    <property type="entry name" value="Val/Leu/Ile-tRNA-synth_edit"/>
</dbReference>
<dbReference type="NCBIfam" id="TIGR00396">
    <property type="entry name" value="leuS_bact"/>
    <property type="match status" value="1"/>
</dbReference>
<dbReference type="PANTHER" id="PTHR43740:SF2">
    <property type="entry name" value="LEUCINE--TRNA LIGASE, MITOCHONDRIAL"/>
    <property type="match status" value="1"/>
</dbReference>
<dbReference type="PANTHER" id="PTHR43740">
    <property type="entry name" value="LEUCYL-TRNA SYNTHETASE"/>
    <property type="match status" value="1"/>
</dbReference>
<dbReference type="Pfam" id="PF08264">
    <property type="entry name" value="Anticodon_1"/>
    <property type="match status" value="1"/>
</dbReference>
<dbReference type="Pfam" id="PF00133">
    <property type="entry name" value="tRNA-synt_1"/>
    <property type="match status" value="2"/>
</dbReference>
<dbReference type="Pfam" id="PF13603">
    <property type="entry name" value="tRNA-synt_1_2"/>
    <property type="match status" value="1"/>
</dbReference>
<dbReference type="Pfam" id="PF09334">
    <property type="entry name" value="tRNA-synt_1g"/>
    <property type="match status" value="1"/>
</dbReference>
<dbReference type="PRINTS" id="PR00985">
    <property type="entry name" value="TRNASYNTHLEU"/>
</dbReference>
<dbReference type="SUPFAM" id="SSF47323">
    <property type="entry name" value="Anticodon-binding domain of a subclass of class I aminoacyl-tRNA synthetases"/>
    <property type="match status" value="1"/>
</dbReference>
<dbReference type="SUPFAM" id="SSF52374">
    <property type="entry name" value="Nucleotidylyl transferase"/>
    <property type="match status" value="1"/>
</dbReference>
<dbReference type="SUPFAM" id="SSF50677">
    <property type="entry name" value="ValRS/IleRS/LeuRS editing domain"/>
    <property type="match status" value="1"/>
</dbReference>
<dbReference type="PROSITE" id="PS00178">
    <property type="entry name" value="AA_TRNA_LIGASE_I"/>
    <property type="match status" value="1"/>
</dbReference>
<accession>C4ZWC9</accession>
<protein>
    <recommendedName>
        <fullName evidence="1">Leucine--tRNA ligase</fullName>
        <ecNumber evidence="1">6.1.1.4</ecNumber>
    </recommendedName>
    <alternativeName>
        <fullName evidence="1">Leucyl-tRNA synthetase</fullName>
        <shortName evidence="1">LeuRS</shortName>
    </alternativeName>
</protein>
<keyword id="KW-0030">Aminoacyl-tRNA synthetase</keyword>
<keyword id="KW-0067">ATP-binding</keyword>
<keyword id="KW-0963">Cytoplasm</keyword>
<keyword id="KW-0436">Ligase</keyword>
<keyword id="KW-0547">Nucleotide-binding</keyword>
<keyword id="KW-0648">Protein biosynthesis</keyword>
<evidence type="ECO:0000255" key="1">
    <source>
        <dbReference type="HAMAP-Rule" id="MF_00049"/>
    </source>
</evidence>
<organism>
    <name type="scientific">Escherichia coli (strain K12 / MC4100 / BW2952)</name>
    <dbReference type="NCBI Taxonomy" id="595496"/>
    <lineage>
        <taxon>Bacteria</taxon>
        <taxon>Pseudomonadati</taxon>
        <taxon>Pseudomonadota</taxon>
        <taxon>Gammaproteobacteria</taxon>
        <taxon>Enterobacterales</taxon>
        <taxon>Enterobacteriaceae</taxon>
        <taxon>Escherichia</taxon>
    </lineage>
</organism>
<reference key="1">
    <citation type="journal article" date="2009" name="J. Bacteriol.">
        <title>Genomic sequencing reveals regulatory mutations and recombinational events in the widely used MC4100 lineage of Escherichia coli K-12.</title>
        <authorList>
            <person name="Ferenci T."/>
            <person name="Zhou Z."/>
            <person name="Betteridge T."/>
            <person name="Ren Y."/>
            <person name="Liu Y."/>
            <person name="Feng L."/>
            <person name="Reeves P.R."/>
            <person name="Wang L."/>
        </authorList>
    </citation>
    <scope>NUCLEOTIDE SEQUENCE [LARGE SCALE GENOMIC DNA]</scope>
    <source>
        <strain>K12 / MC4100 / BW2952</strain>
    </source>
</reference>